<keyword id="KW-0007">Acetylation</keyword>
<keyword id="KW-0025">Alternative splicing</keyword>
<keyword id="KW-0514">Muscle protein</keyword>
<keyword id="KW-0597">Phosphoprotein</keyword>
<keyword id="KW-1185">Reference proteome</keyword>
<dbReference type="EMBL" id="M10013">
    <property type="protein sequence ID" value="AAA49099.1"/>
    <property type="molecule type" value="mRNA"/>
</dbReference>
<dbReference type="EMBL" id="K02263">
    <property type="protein sequence ID" value="AAA49098.1"/>
    <property type="molecule type" value="mRNA"/>
</dbReference>
<dbReference type="PIR" id="A25373">
    <property type="entry name" value="TPCHTC"/>
</dbReference>
<dbReference type="RefSeq" id="NP_990780.1">
    <property type="nucleotide sequence ID" value="NM_205449.1"/>
</dbReference>
<dbReference type="FunCoup" id="P02642">
    <property type="interactions" value="8"/>
</dbReference>
<dbReference type="STRING" id="9031.ENSGALP00000050238"/>
<dbReference type="PaxDb" id="9031-ENSGALP00000000400"/>
<dbReference type="GeneID" id="396433"/>
<dbReference type="KEGG" id="gga:396433"/>
<dbReference type="CTD" id="7139"/>
<dbReference type="VEuPathDB" id="HostDB:geneid_396433"/>
<dbReference type="eggNOG" id="KOG3634">
    <property type="taxonomic scope" value="Eukaryota"/>
</dbReference>
<dbReference type="InParanoid" id="P02642"/>
<dbReference type="OrthoDB" id="330499at2759"/>
<dbReference type="PhylomeDB" id="P02642"/>
<dbReference type="PRO" id="PR:P02642"/>
<dbReference type="Proteomes" id="UP000000539">
    <property type="component" value="Unassembled WGS sequence"/>
</dbReference>
<dbReference type="GO" id="GO:0005861">
    <property type="term" value="C:troponin complex"/>
    <property type="evidence" value="ECO:0000318"/>
    <property type="project" value="GO_Central"/>
</dbReference>
<dbReference type="GO" id="GO:0005523">
    <property type="term" value="F:tropomyosin binding"/>
    <property type="evidence" value="ECO:0000318"/>
    <property type="project" value="GO_Central"/>
</dbReference>
<dbReference type="GO" id="GO:0030172">
    <property type="term" value="F:troponin C binding"/>
    <property type="evidence" value="ECO:0000318"/>
    <property type="project" value="GO_Central"/>
</dbReference>
<dbReference type="GO" id="GO:0031013">
    <property type="term" value="F:troponin I binding"/>
    <property type="evidence" value="ECO:0000318"/>
    <property type="project" value="GO_Central"/>
</dbReference>
<dbReference type="GO" id="GO:0060048">
    <property type="term" value="P:cardiac muscle contraction"/>
    <property type="evidence" value="ECO:0000318"/>
    <property type="project" value="GO_Central"/>
</dbReference>
<dbReference type="GO" id="GO:0006937">
    <property type="term" value="P:regulation of muscle contraction"/>
    <property type="evidence" value="ECO:0007669"/>
    <property type="project" value="InterPro"/>
</dbReference>
<dbReference type="FunFam" id="1.20.5.350:FF:000001">
    <property type="entry name" value="Troponin T, fast skeletal muscle"/>
    <property type="match status" value="1"/>
</dbReference>
<dbReference type="Gene3D" id="1.20.5.350">
    <property type="match status" value="1"/>
</dbReference>
<dbReference type="InterPro" id="IPR027707">
    <property type="entry name" value="TNNT"/>
</dbReference>
<dbReference type="InterPro" id="IPR001978">
    <property type="entry name" value="Troponin"/>
</dbReference>
<dbReference type="InterPro" id="IPR038077">
    <property type="entry name" value="Troponin_sf"/>
</dbReference>
<dbReference type="PANTHER" id="PTHR11521">
    <property type="entry name" value="TROPONIN T"/>
    <property type="match status" value="1"/>
</dbReference>
<dbReference type="PANTHER" id="PTHR11521:SF5">
    <property type="entry name" value="TROPONIN T, CARDIAC MUSCLE"/>
    <property type="match status" value="1"/>
</dbReference>
<dbReference type="Pfam" id="PF00992">
    <property type="entry name" value="Troponin"/>
    <property type="match status" value="1"/>
</dbReference>
<dbReference type="SUPFAM" id="SSF90250">
    <property type="entry name" value="Troponin coil-coiled subunits"/>
    <property type="match status" value="1"/>
</dbReference>
<protein>
    <recommendedName>
        <fullName>Troponin T, cardiac muscle isoforms</fullName>
        <shortName>TnTC</shortName>
    </recommendedName>
</protein>
<name>TNNT2_CHICK</name>
<sequence>MSDSEEVVEEYEQEQEEEYVEEEEEEWLEEDDGQEDQVDEEEEETEETTAEEQEDETKAPGEGGEGDREQEPGEGESKPKPKPFMPNLVPPKIPDGERLDFDDIHRKRMEKDLNELQALIEAHFESRKKEEEELISLKDRIEQRRAERAEQQRIRSEREKERQARMAEERARKEEEEARKKAEKEARKKKAFSNMLHFGGYMQKSEKKGGKKQTEREKKKKILSERRKPLNIDHLSEDKLRDKAKELWQTIRDLEAEKFDLQEKFKRQKYEINVLRNRVSDHQKVKGSKAARGKTMVGGRWK</sequence>
<organism>
    <name type="scientific">Gallus gallus</name>
    <name type="common">Chicken</name>
    <dbReference type="NCBI Taxonomy" id="9031"/>
    <lineage>
        <taxon>Eukaryota</taxon>
        <taxon>Metazoa</taxon>
        <taxon>Chordata</taxon>
        <taxon>Craniata</taxon>
        <taxon>Vertebrata</taxon>
        <taxon>Euteleostomi</taxon>
        <taxon>Archelosauria</taxon>
        <taxon>Archosauria</taxon>
        <taxon>Dinosauria</taxon>
        <taxon>Saurischia</taxon>
        <taxon>Theropoda</taxon>
        <taxon>Coelurosauria</taxon>
        <taxon>Aves</taxon>
        <taxon>Neognathae</taxon>
        <taxon>Galloanserae</taxon>
        <taxon>Galliformes</taxon>
        <taxon>Phasianidae</taxon>
        <taxon>Phasianinae</taxon>
        <taxon>Gallus</taxon>
    </lineage>
</organism>
<accession>P02642</accession>
<evidence type="ECO:0000250" key="1"/>
<evidence type="ECO:0000256" key="2">
    <source>
        <dbReference type="SAM" id="MobiDB-lite"/>
    </source>
</evidence>
<evidence type="ECO:0000303" key="3">
    <source>
    </source>
</evidence>
<evidence type="ECO:0000305" key="4"/>
<feature type="initiator methionine" description="Removed" evidence="1">
    <location>
        <position position="1"/>
    </location>
</feature>
<feature type="chain" id="PRO_0000186182" description="Troponin T, cardiac muscle isoforms">
    <location>
        <begin position="2"/>
        <end position="302"/>
    </location>
</feature>
<feature type="region of interest" description="Disordered" evidence="2">
    <location>
        <begin position="1"/>
        <end position="99"/>
    </location>
</feature>
<feature type="region of interest" description="Disordered" evidence="2">
    <location>
        <begin position="138"/>
        <end position="230"/>
    </location>
</feature>
<feature type="region of interest" description="Disordered" evidence="2">
    <location>
        <begin position="280"/>
        <end position="302"/>
    </location>
</feature>
<feature type="compositionally biased region" description="Acidic residues" evidence="2">
    <location>
        <begin position="1"/>
        <end position="55"/>
    </location>
</feature>
<feature type="compositionally biased region" description="Basic and acidic residues" evidence="2">
    <location>
        <begin position="65"/>
        <end position="79"/>
    </location>
</feature>
<feature type="compositionally biased region" description="Pro residues" evidence="2">
    <location>
        <begin position="82"/>
        <end position="93"/>
    </location>
</feature>
<feature type="compositionally biased region" description="Basic and acidic residues" evidence="2">
    <location>
        <begin position="138"/>
        <end position="186"/>
    </location>
</feature>
<feature type="compositionally biased region" description="Basic and acidic residues" evidence="2">
    <location>
        <begin position="204"/>
        <end position="230"/>
    </location>
</feature>
<feature type="modified residue" description="N-acetylserine" evidence="1">
    <location>
        <position position="2"/>
    </location>
</feature>
<feature type="modified residue" description="Phosphoserine; by CK2" evidence="1">
    <location>
        <position position="2"/>
    </location>
</feature>
<feature type="splice variant" id="VSP_006632" description="In isoform 2." evidence="3">
    <location>
        <begin position="23"/>
        <end position="32"/>
    </location>
</feature>
<reference key="1">
    <citation type="journal article" date="1985" name="J. Biol. Chem.">
        <title>A single cardiac troponin T gene generates embryonic and adult isoforms via developmentally regulated alternate splicing.</title>
        <authorList>
            <person name="Cooper T.A."/>
            <person name="Ordahl C.P."/>
        </authorList>
    </citation>
    <scope>NUCLEOTIDE SEQUENCE [MRNA] (ISOFORMS 1 AND 2)</scope>
</reference>
<reference key="2">
    <citation type="journal article" date="1984" name="Science">
        <title>A single troponin T gene regulated by different programs in cardiac and skeletal muscle development.</title>
        <authorList>
            <person name="Cooper T.A."/>
            <person name="Ordahl C.P."/>
        </authorList>
    </citation>
    <scope>NUCLEOTIDE SEQUENCE [MRNA] OF 68-302</scope>
</reference>
<comment type="function">
    <text>Troponin T is the tropomyosin-binding subunit of troponin, the thin filament regulatory complex which confers calcium-sensitivity to striated muscle actomyosin ATPase activity.</text>
</comment>
<comment type="alternative products">
    <event type="alternative splicing"/>
    <isoform>
        <id>P02642-1</id>
        <name>1</name>
        <name>Embryonic</name>
        <sequence type="displayed"/>
    </isoform>
    <isoform>
        <id>P02642-2</id>
        <name>2</name>
        <name>Adult</name>
        <sequence type="described" ref="VSP_006632"/>
    </isoform>
</comment>
<comment type="similarity">
    <text evidence="4">Belongs to the troponin T family.</text>
</comment>
<gene>
    <name type="primary">TNNT2</name>
</gene>
<proteinExistence type="evidence at transcript level"/>